<sequence>MKDRAADPVTKFSPSPYETGQFLRISERADVGTPQIDYLLATQRPDGLWGSVGFELVPTLGAVAGLSSRPEYADRAGVTDAVARACEKLWELALGEGGLPKLPDTVASEIIVPSLIDLLSEVLQRHRPAVGGKAGQEQEFPSPPGANAELWRQLSDRIARGQAIPKTAWHTLEAFHPLPKQFAATVTPAADGAVTCSPSSTAAWLSAVGTDAGASTRAYLDEAQSRYGGAIPMGSSMPYFEVLWVLNLVLKYFPDVPIPREIIEEIAAGFSDSGIGGGPGLPPDGDDTAYANLAGDKLGAPTHPEILMKFWAEDHFVSYPGEQTPSETVNAHALEYLNHLRMRRGITEFGAVEDACAEWVISQQTEDGCWYDKWNVSPYYSTAACVEALLDARKQDEPQLDSLRRAREWLLRHQTDSGGWGMAEPSPEETAYAVLALDLFASRGGEGAEECAAAISRAKEFFTDESRENPPLWMGKDLYTPFRIVDVTVMCGRAVVGRY</sequence>
<name>CYC1_KITGR</name>
<feature type="chain" id="PRO_0000418817" description="Terpentedienyl-diphosphate synthase">
    <location>
        <begin position="1"/>
        <end position="499"/>
    </location>
</feature>
<feature type="short sequence motif" description="DXDD motif">
    <location>
        <begin position="284"/>
        <end position="287"/>
    </location>
</feature>
<feature type="binding site" evidence="1">
    <location>
        <position position="284"/>
    </location>
    <ligand>
        <name>Mg(2+)</name>
        <dbReference type="ChEBI" id="CHEBI:18420"/>
    </ligand>
</feature>
<feature type="binding site" evidence="1">
    <location>
        <position position="286"/>
    </location>
    <ligand>
        <name>Mg(2+)</name>
        <dbReference type="ChEBI" id="CHEBI:18420"/>
    </ligand>
</feature>
<reference key="1">
    <citation type="journal article" date="2001" name="J. Bacteriol.">
        <title>Eubacterial diterpene cyclase genes essential for production of the isoprenoid antibiotic terpentecin.</title>
        <authorList>
            <person name="Dairi T."/>
            <person name="Hamano Y."/>
            <person name="Kuzuyama T."/>
            <person name="Itoh N."/>
            <person name="Furihata K."/>
            <person name="Seto H."/>
        </authorList>
    </citation>
    <scope>NUCLEOTIDE SEQUENCE [GENOMIC DNA]</scope>
    <scope>PATHWAY</scope>
    <scope>DISRUPTION PHENOTYPE</scope>
    <source>
        <strain>MF730-N6</strain>
    </source>
</reference>
<reference key="2">
    <citation type="journal article" date="2002" name="J. Biol. Chem.">
        <title>Functional analysis of eubacterial diterpene cyclases responsible for biosynthesis of a diterpene antibiotic, terpentecin.</title>
        <authorList>
            <person name="Hamano Y."/>
            <person name="Kuzuyama T."/>
            <person name="Itoh N."/>
            <person name="Furihata K."/>
            <person name="Seto H."/>
            <person name="Dairi T."/>
        </authorList>
    </citation>
    <scope>FUNCTION</scope>
    <scope>CATALYTIC ACTIVITY</scope>
    <scope>COFACTOR</scope>
    <scope>BIOPHYSICOCHEMICAL PROPERTIES</scope>
    <scope>PATHWAY</scope>
    <scope>SUBUNIT</scope>
    <source>
        <strain>MF730-N6</strain>
    </source>
</reference>
<keyword id="KW-0045">Antibiotic biosynthesis</keyword>
<keyword id="KW-0413">Isomerase</keyword>
<keyword id="KW-0460">Magnesium</keyword>
<keyword id="KW-0479">Metal-binding</keyword>
<gene>
    <name type="primary">cyc1</name>
</gene>
<organism>
    <name type="scientific">Kitasatospora griseola</name>
    <name type="common">Streptomyces griseolosporeus</name>
    <dbReference type="NCBI Taxonomy" id="2064"/>
    <lineage>
        <taxon>Bacteria</taxon>
        <taxon>Bacillati</taxon>
        <taxon>Actinomycetota</taxon>
        <taxon>Actinomycetes</taxon>
        <taxon>Kitasatosporales</taxon>
        <taxon>Streptomycetaceae</taxon>
        <taxon>Kitasatospora</taxon>
    </lineage>
</organism>
<dbReference type="EC" id="5.5.1.15"/>
<dbReference type="EMBL" id="AB048795">
    <property type="protein sequence ID" value="BAB39206.1"/>
    <property type="molecule type" value="Genomic_DNA"/>
</dbReference>
<dbReference type="SMR" id="Q9AJE4"/>
<dbReference type="STRING" id="2064.TR51_15710"/>
<dbReference type="KEGG" id="ag:BAB39206"/>
<dbReference type="GO" id="GO:0016872">
    <property type="term" value="F:intramolecular lyase activity"/>
    <property type="evidence" value="ECO:0000314"/>
    <property type="project" value="UniProtKB"/>
</dbReference>
<dbReference type="GO" id="GO:0000287">
    <property type="term" value="F:magnesium ion binding"/>
    <property type="evidence" value="ECO:0007669"/>
    <property type="project" value="TreeGrafter"/>
</dbReference>
<dbReference type="GO" id="GO:0010333">
    <property type="term" value="F:terpene synthase activity"/>
    <property type="evidence" value="ECO:0007669"/>
    <property type="project" value="InterPro"/>
</dbReference>
<dbReference type="GO" id="GO:0017000">
    <property type="term" value="P:antibiotic biosynthetic process"/>
    <property type="evidence" value="ECO:0000314"/>
    <property type="project" value="UniProtKB"/>
</dbReference>
<dbReference type="GO" id="GO:0016102">
    <property type="term" value="P:diterpenoid biosynthetic process"/>
    <property type="evidence" value="ECO:0007669"/>
    <property type="project" value="TreeGrafter"/>
</dbReference>
<dbReference type="FunFam" id="1.50.10.20:FF:000060">
    <property type="entry name" value="Terpentedienyl-diphosphate synthase"/>
    <property type="match status" value="1"/>
</dbReference>
<dbReference type="Gene3D" id="1.50.10.160">
    <property type="match status" value="1"/>
</dbReference>
<dbReference type="Gene3D" id="1.50.10.20">
    <property type="match status" value="1"/>
</dbReference>
<dbReference type="InterPro" id="IPR032696">
    <property type="entry name" value="SQ_cyclase_C"/>
</dbReference>
<dbReference type="InterPro" id="IPR050148">
    <property type="entry name" value="Terpene_synthase-like"/>
</dbReference>
<dbReference type="InterPro" id="IPR008930">
    <property type="entry name" value="Terpenoid_cyclase/PrenylTrfase"/>
</dbReference>
<dbReference type="PANTHER" id="PTHR31739:SF25">
    <property type="entry name" value="(E,E)-GERANYLLINALOOL SYNTHASE"/>
    <property type="match status" value="1"/>
</dbReference>
<dbReference type="PANTHER" id="PTHR31739">
    <property type="entry name" value="ENT-COPALYL DIPHOSPHATE SYNTHASE, CHLOROPLASTIC"/>
    <property type="match status" value="1"/>
</dbReference>
<dbReference type="Pfam" id="PF13243">
    <property type="entry name" value="SQHop_cyclase_C"/>
    <property type="match status" value="1"/>
</dbReference>
<dbReference type="SUPFAM" id="SSF48239">
    <property type="entry name" value="Terpenoid cyclases/Protein prenyltransferases"/>
    <property type="match status" value="1"/>
</dbReference>
<evidence type="ECO:0000250" key="1">
    <source>
        <dbReference type="UniProtKB" id="C7BKP9"/>
    </source>
</evidence>
<evidence type="ECO:0000269" key="2">
    <source>
    </source>
</evidence>
<evidence type="ECO:0000269" key="3">
    <source>
    </source>
</evidence>
<evidence type="ECO:0000305" key="4"/>
<accession>Q9AJE4</accession>
<proteinExistence type="evidence at protein level"/>
<comment type="function">
    <text evidence="3">Involved in the production of the isoprenoid antibiotic terpentecin. Converts geranylgeranyl diphosphate (GGDP) into terpentedienol diphosphate (TDP) by a protonation-initiated cyclization.</text>
</comment>
<comment type="catalytic activity">
    <reaction evidence="3">
        <text>(2E,6E,10E)-geranylgeranyl diphosphate = terpentedienyl diphosphate</text>
        <dbReference type="Rhea" id="RHEA:25613"/>
        <dbReference type="ChEBI" id="CHEBI:58756"/>
        <dbReference type="ChEBI" id="CHEBI:58821"/>
        <dbReference type="EC" id="5.5.1.15"/>
    </reaction>
</comment>
<comment type="cofactor">
    <cofactor evidence="3">
        <name>Mg(2+)</name>
        <dbReference type="ChEBI" id="CHEBI:18420"/>
    </cofactor>
</comment>
<comment type="biophysicochemical properties">
    <kinetics>
        <KM evidence="3">64.2 uM for GGDP</KM>
        <Vmax evidence="3">94.7 nmol/min/mg enzyme</Vmax>
    </kinetics>
    <phDependence>
        <text evidence="3">Optimum pH is 6.8.</text>
    </phDependence>
    <temperatureDependence>
        <text evidence="3">Optimum temperature is 25-30 degrees Celsius.</text>
    </temperatureDependence>
</comment>
<comment type="pathway">
    <text evidence="2 3">Antibiotic biosynthesis.</text>
</comment>
<comment type="subunit">
    <text evidence="3">Monomer.</text>
</comment>
<comment type="disruption phenotype">
    <text evidence="2">Mutants do not produce terpentecin.</text>
</comment>
<comment type="similarity">
    <text evidence="4">Belongs to the terpene synthase family.</text>
</comment>
<protein>
    <recommendedName>
        <fullName>Terpentedienyl-diphosphate synthase</fullName>
        <ecNumber>5.5.1.15</ecNumber>
    </recommendedName>
</protein>